<keyword id="KW-0143">Chaperone</keyword>
<keyword id="KW-0963">Cytoplasm</keyword>
<keyword id="KW-0690">Ribosome biogenesis</keyword>
<keyword id="KW-0698">rRNA processing</keyword>
<gene>
    <name evidence="1" type="primary">rimM</name>
    <name type="ordered locus">Mext_0654</name>
</gene>
<name>RIMM_METEP</name>
<sequence>MARRPGSSSRGPARSDRLPAEAVTSARKPHAAAPTPPASPDPGLVLLGEFGRPHGLHGEVRLKSHTSEPLAIAGYGPLHASDGRTLELANVRPAAGSSPDLLIVRVKGVDDRTGAEALNRVTLAIARERLGKVEDEDEFFLTDLIGLTVEDGAGTVIGTIVAVPNFGGGDLLEIRPAAGGPTALLPFTKAFVPSLDIAGGKVVADPPDDLFAPPGPKPADDPG</sequence>
<feature type="chain" id="PRO_0000351775" description="Ribosome maturation factor RimM">
    <location>
        <begin position="1"/>
        <end position="223"/>
    </location>
</feature>
<feature type="domain" description="PRC barrel" evidence="1">
    <location>
        <begin position="136"/>
        <end position="210"/>
    </location>
</feature>
<feature type="region of interest" description="Disordered" evidence="2">
    <location>
        <begin position="1"/>
        <end position="44"/>
    </location>
</feature>
<feature type="region of interest" description="Disordered" evidence="2">
    <location>
        <begin position="204"/>
        <end position="223"/>
    </location>
</feature>
<feature type="compositionally biased region" description="Low complexity" evidence="2">
    <location>
        <begin position="1"/>
        <end position="12"/>
    </location>
</feature>
<reference key="1">
    <citation type="submission" date="2007-12" db="EMBL/GenBank/DDBJ databases">
        <title>Complete sequence of Methylobacterium extorquens PA1.</title>
        <authorList>
            <consortium name="US DOE Joint Genome Institute"/>
            <person name="Copeland A."/>
            <person name="Lucas S."/>
            <person name="Lapidus A."/>
            <person name="Barry K."/>
            <person name="Glavina del Rio T."/>
            <person name="Dalin E."/>
            <person name="Tice H."/>
            <person name="Pitluck S."/>
            <person name="Saunders E."/>
            <person name="Brettin T."/>
            <person name="Bruce D."/>
            <person name="Detter J.C."/>
            <person name="Han C."/>
            <person name="Schmutz J."/>
            <person name="Larimer F."/>
            <person name="Land M."/>
            <person name="Hauser L."/>
            <person name="Kyrpides N."/>
            <person name="Kim E."/>
            <person name="Marx C."/>
            <person name="Richardson P."/>
        </authorList>
    </citation>
    <scope>NUCLEOTIDE SEQUENCE [LARGE SCALE GENOMIC DNA]</scope>
    <source>
        <strain>PA1</strain>
    </source>
</reference>
<protein>
    <recommendedName>
        <fullName evidence="1">Ribosome maturation factor RimM</fullName>
    </recommendedName>
</protein>
<comment type="function">
    <text evidence="1">An accessory protein needed during the final step in the assembly of 30S ribosomal subunit, possibly for assembly of the head region. Essential for efficient processing of 16S rRNA. May be needed both before and after RbfA during the maturation of 16S rRNA. It has affinity for free ribosomal 30S subunits but not for 70S ribosomes.</text>
</comment>
<comment type="subunit">
    <text evidence="1">Binds ribosomal protein uS19.</text>
</comment>
<comment type="subcellular location">
    <subcellularLocation>
        <location evidence="1">Cytoplasm</location>
    </subcellularLocation>
</comment>
<comment type="domain">
    <text evidence="1">The PRC barrel domain binds ribosomal protein uS19.</text>
</comment>
<comment type="similarity">
    <text evidence="1">Belongs to the RimM family.</text>
</comment>
<evidence type="ECO:0000255" key="1">
    <source>
        <dbReference type="HAMAP-Rule" id="MF_00014"/>
    </source>
</evidence>
<evidence type="ECO:0000256" key="2">
    <source>
        <dbReference type="SAM" id="MobiDB-lite"/>
    </source>
</evidence>
<organism>
    <name type="scientific">Methylorubrum extorquens (strain PA1)</name>
    <name type="common">Methylobacterium extorquens</name>
    <dbReference type="NCBI Taxonomy" id="419610"/>
    <lineage>
        <taxon>Bacteria</taxon>
        <taxon>Pseudomonadati</taxon>
        <taxon>Pseudomonadota</taxon>
        <taxon>Alphaproteobacteria</taxon>
        <taxon>Hyphomicrobiales</taxon>
        <taxon>Methylobacteriaceae</taxon>
        <taxon>Methylorubrum</taxon>
    </lineage>
</organism>
<accession>A9W0G2</accession>
<proteinExistence type="inferred from homology"/>
<dbReference type="EMBL" id="CP000908">
    <property type="protein sequence ID" value="ABY29068.1"/>
    <property type="molecule type" value="Genomic_DNA"/>
</dbReference>
<dbReference type="RefSeq" id="WP_012252405.1">
    <property type="nucleotide sequence ID" value="NC_010172.1"/>
</dbReference>
<dbReference type="SMR" id="A9W0G2"/>
<dbReference type="KEGG" id="mex:Mext_0654"/>
<dbReference type="eggNOG" id="COG0806">
    <property type="taxonomic scope" value="Bacteria"/>
</dbReference>
<dbReference type="HOGENOM" id="CLU_077636_0_1_5"/>
<dbReference type="BioCyc" id="MEXT419610:MEXT_RS03235-MONOMER"/>
<dbReference type="GO" id="GO:0005737">
    <property type="term" value="C:cytoplasm"/>
    <property type="evidence" value="ECO:0007669"/>
    <property type="project" value="UniProtKB-SubCell"/>
</dbReference>
<dbReference type="GO" id="GO:0005840">
    <property type="term" value="C:ribosome"/>
    <property type="evidence" value="ECO:0007669"/>
    <property type="project" value="InterPro"/>
</dbReference>
<dbReference type="GO" id="GO:0043022">
    <property type="term" value="F:ribosome binding"/>
    <property type="evidence" value="ECO:0007669"/>
    <property type="project" value="InterPro"/>
</dbReference>
<dbReference type="GO" id="GO:0042274">
    <property type="term" value="P:ribosomal small subunit biogenesis"/>
    <property type="evidence" value="ECO:0007669"/>
    <property type="project" value="UniProtKB-UniRule"/>
</dbReference>
<dbReference type="GO" id="GO:0006364">
    <property type="term" value="P:rRNA processing"/>
    <property type="evidence" value="ECO:0007669"/>
    <property type="project" value="UniProtKB-UniRule"/>
</dbReference>
<dbReference type="Gene3D" id="2.30.30.240">
    <property type="entry name" value="PRC-barrel domain"/>
    <property type="match status" value="1"/>
</dbReference>
<dbReference type="Gene3D" id="2.40.30.60">
    <property type="entry name" value="RimM"/>
    <property type="match status" value="1"/>
</dbReference>
<dbReference type="HAMAP" id="MF_00014">
    <property type="entry name" value="Ribosome_mat_RimM"/>
    <property type="match status" value="1"/>
</dbReference>
<dbReference type="InterPro" id="IPR011033">
    <property type="entry name" value="PRC_barrel-like_sf"/>
</dbReference>
<dbReference type="InterPro" id="IPR056792">
    <property type="entry name" value="PRC_RimM"/>
</dbReference>
<dbReference type="InterPro" id="IPR011961">
    <property type="entry name" value="RimM"/>
</dbReference>
<dbReference type="InterPro" id="IPR002676">
    <property type="entry name" value="RimM_N"/>
</dbReference>
<dbReference type="InterPro" id="IPR036976">
    <property type="entry name" value="RimM_N_sf"/>
</dbReference>
<dbReference type="InterPro" id="IPR009000">
    <property type="entry name" value="Transl_B-barrel_sf"/>
</dbReference>
<dbReference type="NCBIfam" id="TIGR02273">
    <property type="entry name" value="16S_RimM"/>
    <property type="match status" value="1"/>
</dbReference>
<dbReference type="PANTHER" id="PTHR33692">
    <property type="entry name" value="RIBOSOME MATURATION FACTOR RIMM"/>
    <property type="match status" value="1"/>
</dbReference>
<dbReference type="PANTHER" id="PTHR33692:SF1">
    <property type="entry name" value="RIBOSOME MATURATION FACTOR RIMM"/>
    <property type="match status" value="1"/>
</dbReference>
<dbReference type="Pfam" id="PF24986">
    <property type="entry name" value="PRC_RimM"/>
    <property type="match status" value="1"/>
</dbReference>
<dbReference type="Pfam" id="PF01782">
    <property type="entry name" value="RimM"/>
    <property type="match status" value="1"/>
</dbReference>
<dbReference type="SUPFAM" id="SSF50346">
    <property type="entry name" value="PRC-barrel domain"/>
    <property type="match status" value="1"/>
</dbReference>
<dbReference type="SUPFAM" id="SSF50447">
    <property type="entry name" value="Translation proteins"/>
    <property type="match status" value="1"/>
</dbReference>